<comment type="function">
    <text evidence="1">Mutarotase converts alpha-aldose to the beta-anomer. It is active on D-glucose, L-arabinose, D-xylose, D-galactose, maltose and lactose (By similarity).</text>
</comment>
<comment type="catalytic activity">
    <reaction>
        <text>UDP-alpha-D-glucose = UDP-alpha-D-galactose</text>
        <dbReference type="Rhea" id="RHEA:22168"/>
        <dbReference type="ChEBI" id="CHEBI:58885"/>
        <dbReference type="ChEBI" id="CHEBI:66914"/>
        <dbReference type="EC" id="5.1.3.2"/>
    </reaction>
</comment>
<comment type="catalytic activity">
    <reaction evidence="2">
        <text>alpha-D-glucose = beta-D-glucose</text>
        <dbReference type="Rhea" id="RHEA:10264"/>
        <dbReference type="ChEBI" id="CHEBI:15903"/>
        <dbReference type="ChEBI" id="CHEBI:17925"/>
        <dbReference type="EC" id="5.1.3.3"/>
    </reaction>
</comment>
<comment type="cofactor">
    <cofactor>
        <name>NAD(+)</name>
        <dbReference type="ChEBI" id="CHEBI:57540"/>
    </cofactor>
</comment>
<comment type="pathway">
    <text>Carbohydrate metabolism; galactose metabolism.</text>
</comment>
<comment type="pathway">
    <text>Carbohydrate metabolism; hexose metabolism.</text>
</comment>
<comment type="similarity">
    <text evidence="3">In the N-terminal section; belongs to the NAD(P)-dependent epimerase/dehydratase family.</text>
</comment>
<comment type="similarity">
    <text evidence="3">In the C-terminal section; belongs to the aldose epimerase family.</text>
</comment>
<gene>
    <name type="primary">GAL10</name>
</gene>
<accession>P56600</accession>
<feature type="chain" id="PRO_0000197438" description="Bifunctional protein GAL10">
    <location>
        <begin position="1"/>
        <end position="153" status="greater than"/>
    </location>
</feature>
<feature type="region of interest" description="Galactowaldenase">
    <location>
        <begin position="1"/>
        <end position="153" status="greater than"/>
    </location>
</feature>
<feature type="non-terminal residue">
    <location>
        <position position="153"/>
    </location>
</feature>
<reference key="1">
    <citation type="journal article" date="1997" name="Yeast">
        <title>Galactose-inducible expression systems in Candida maltosa using promoters of newly-isolated GAL1 and GAL10 genes.</title>
        <authorList>
            <person name="Park S.M."/>
            <person name="Ohkuma M."/>
            <person name="Masuda Y."/>
            <person name="Ohta A."/>
            <person name="Takagi M."/>
        </authorList>
    </citation>
    <scope>NUCLEOTIDE SEQUENCE [GENOMIC DNA]</scope>
    <source>
        <strain>ATCC 28140 / CBS 5611 / IAM 12247 / JCM 1504 / NBRC 1977</strain>
    </source>
</reference>
<evidence type="ECO:0000250" key="1"/>
<evidence type="ECO:0000255" key="2">
    <source>
        <dbReference type="PROSITE-ProRule" id="PRU10126"/>
    </source>
</evidence>
<evidence type="ECO:0000305" key="3"/>
<keyword id="KW-0119">Carbohydrate metabolism</keyword>
<keyword id="KW-0299">Galactose metabolism</keyword>
<keyword id="KW-0413">Isomerase</keyword>
<keyword id="KW-0511">Multifunctional enzyme</keyword>
<keyword id="KW-0520">NAD</keyword>
<name>GAL10_CANMA</name>
<organism>
    <name type="scientific">Candida maltosa</name>
    <name type="common">Yeast</name>
    <dbReference type="NCBI Taxonomy" id="5479"/>
    <lineage>
        <taxon>Eukaryota</taxon>
        <taxon>Fungi</taxon>
        <taxon>Dikarya</taxon>
        <taxon>Ascomycota</taxon>
        <taxon>Saccharomycotina</taxon>
        <taxon>Pichiomycetes</taxon>
        <taxon>Debaryomycetaceae</taxon>
        <taxon>Candida/Lodderomyces clade</taxon>
        <taxon>Candida</taxon>
    </lineage>
</organism>
<dbReference type="EC" id="5.1.3.2"/>
<dbReference type="EC" id="5.1.3.3"/>
<dbReference type="EMBL" id="D29759">
    <property type="status" value="NOT_ANNOTATED_CDS"/>
    <property type="molecule type" value="Genomic_DNA"/>
</dbReference>
<dbReference type="SMR" id="P56600"/>
<dbReference type="UniPathway" id="UPA00214"/>
<dbReference type="UniPathway" id="UPA00242"/>
<dbReference type="GO" id="GO:0005829">
    <property type="term" value="C:cytosol"/>
    <property type="evidence" value="ECO:0007669"/>
    <property type="project" value="TreeGrafter"/>
</dbReference>
<dbReference type="GO" id="GO:0004034">
    <property type="term" value="F:aldose 1-epimerase activity"/>
    <property type="evidence" value="ECO:0007669"/>
    <property type="project" value="UniProtKB-EC"/>
</dbReference>
<dbReference type="GO" id="GO:0003978">
    <property type="term" value="F:UDP-glucose 4-epimerase activity"/>
    <property type="evidence" value="ECO:0007669"/>
    <property type="project" value="UniProtKB-EC"/>
</dbReference>
<dbReference type="GO" id="GO:0006012">
    <property type="term" value="P:galactose metabolic process"/>
    <property type="evidence" value="ECO:0007669"/>
    <property type="project" value="UniProtKB-UniPathway"/>
</dbReference>
<dbReference type="Gene3D" id="3.40.50.720">
    <property type="entry name" value="NAD(P)-binding Rossmann-like Domain"/>
    <property type="match status" value="1"/>
</dbReference>
<dbReference type="InterPro" id="IPR001509">
    <property type="entry name" value="Epimerase_deHydtase"/>
</dbReference>
<dbReference type="InterPro" id="IPR036291">
    <property type="entry name" value="NAD(P)-bd_dom_sf"/>
</dbReference>
<dbReference type="PANTHER" id="PTHR43725">
    <property type="entry name" value="UDP-GLUCOSE 4-EPIMERASE"/>
    <property type="match status" value="1"/>
</dbReference>
<dbReference type="PANTHER" id="PTHR43725:SF47">
    <property type="entry name" value="UDP-GLUCOSE 4-EPIMERASE"/>
    <property type="match status" value="1"/>
</dbReference>
<dbReference type="Pfam" id="PF01370">
    <property type="entry name" value="Epimerase"/>
    <property type="match status" value="1"/>
</dbReference>
<dbReference type="SUPFAM" id="SSF51735">
    <property type="entry name" value="NAD(P)-binding Rossmann-fold domains"/>
    <property type="match status" value="1"/>
</dbReference>
<proteinExistence type="inferred from homology"/>
<protein>
    <recommendedName>
        <fullName>Bifunctional protein GAL10</fullName>
    </recommendedName>
    <domain>
        <recommendedName>
            <fullName>UDP-glucose 4-epimerase</fullName>
            <ecNumber>5.1.3.2</ecNumber>
        </recommendedName>
        <alternativeName>
            <fullName>Galactowaldenase</fullName>
        </alternativeName>
    </domain>
    <domain>
        <recommendedName>
            <fullName>Aldose 1-epimerase</fullName>
            <ecNumber>5.1.3.3</ecNumber>
        </recommendedName>
        <alternativeName>
            <fullName>Galactose mutarotase</fullName>
        </alternativeName>
    </domain>
</protein>
<sequence length="153" mass="16752">MSDDIFLVTGGAGYIGSHTVIELINHGIKVVIADNLSNSSYDAVARIEFIVKQHVSHFIKVDIRNEKELNQVFSNHKISGVIHFAALKAVGESTKIPLEYYDNNVSGTIALLNVCKSNNVKTIVFSSSATVYGDVTRFGDNSMIPIPEHCPME</sequence>